<accession>Q3BQB5</accession>
<proteinExistence type="inferred from homology"/>
<name>COBQ_XANE5</name>
<feature type="chain" id="PRO_0000332401" description="Cobyric acid synthase">
    <location>
        <begin position="1"/>
        <end position="478"/>
    </location>
</feature>
<feature type="domain" description="GATase cobBQ-type" evidence="1">
    <location>
        <begin position="250"/>
        <end position="437"/>
    </location>
</feature>
<feature type="active site" description="Nucleophile" evidence="1">
    <location>
        <position position="331"/>
    </location>
</feature>
<feature type="active site" evidence="1">
    <location>
        <position position="429"/>
    </location>
</feature>
<evidence type="ECO:0000255" key="1">
    <source>
        <dbReference type="HAMAP-Rule" id="MF_00028"/>
    </source>
</evidence>
<reference key="1">
    <citation type="journal article" date="2005" name="J. Bacteriol.">
        <title>Insights into genome plasticity and pathogenicity of the plant pathogenic Bacterium Xanthomonas campestris pv. vesicatoria revealed by the complete genome sequence.</title>
        <authorList>
            <person name="Thieme F."/>
            <person name="Koebnik R."/>
            <person name="Bekel T."/>
            <person name="Berger C."/>
            <person name="Boch J."/>
            <person name="Buettner D."/>
            <person name="Caldana C."/>
            <person name="Gaigalat L."/>
            <person name="Goesmann A."/>
            <person name="Kay S."/>
            <person name="Kirchner O."/>
            <person name="Lanz C."/>
            <person name="Linke B."/>
            <person name="McHardy A.C."/>
            <person name="Meyer F."/>
            <person name="Mittenhuber G."/>
            <person name="Nies D.H."/>
            <person name="Niesbach-Kloesgen U."/>
            <person name="Patschkowski T."/>
            <person name="Rueckert C."/>
            <person name="Rupp O."/>
            <person name="Schneiker S."/>
            <person name="Schuster S.C."/>
            <person name="Vorhoelter F.J."/>
            <person name="Weber E."/>
            <person name="Puehler A."/>
            <person name="Bonas U."/>
            <person name="Bartels D."/>
            <person name="Kaiser O."/>
        </authorList>
    </citation>
    <scope>NUCLEOTIDE SEQUENCE [LARGE SCALE GENOMIC DNA]</scope>
    <source>
        <strain>85-10</strain>
    </source>
</reference>
<protein>
    <recommendedName>
        <fullName evidence="1">Cobyric acid synthase</fullName>
    </recommendedName>
</protein>
<organism>
    <name type="scientific">Xanthomonas euvesicatoria pv. vesicatoria (strain 85-10)</name>
    <name type="common">Xanthomonas campestris pv. vesicatoria</name>
    <dbReference type="NCBI Taxonomy" id="316273"/>
    <lineage>
        <taxon>Bacteria</taxon>
        <taxon>Pseudomonadati</taxon>
        <taxon>Pseudomonadota</taxon>
        <taxon>Gammaproteobacteria</taxon>
        <taxon>Lysobacterales</taxon>
        <taxon>Lysobacteraceae</taxon>
        <taxon>Xanthomonas</taxon>
    </lineage>
</organism>
<comment type="function">
    <text evidence="1">Catalyzes amidations at positions B, D, E, and G on adenosylcobyrinic A,C-diamide. NH(2) groups are provided by glutamine, and one molecule of ATP is hydrogenolyzed for each amidation.</text>
</comment>
<comment type="pathway">
    <text evidence="1">Cofactor biosynthesis; adenosylcobalamin biosynthesis.</text>
</comment>
<comment type="similarity">
    <text evidence="1">Belongs to the CobB/CobQ family. CobQ subfamily.</text>
</comment>
<gene>
    <name evidence="1" type="primary">cobQ</name>
    <name type="ordered locus">XCV3317</name>
</gene>
<dbReference type="EMBL" id="AM039952">
    <property type="protein sequence ID" value="CAJ25048.1"/>
    <property type="molecule type" value="Genomic_DNA"/>
</dbReference>
<dbReference type="KEGG" id="xcv:XCV3317"/>
<dbReference type="eggNOG" id="COG1492">
    <property type="taxonomic scope" value="Bacteria"/>
</dbReference>
<dbReference type="HOGENOM" id="CLU_019250_2_0_6"/>
<dbReference type="UniPathway" id="UPA00148"/>
<dbReference type="Proteomes" id="UP000007069">
    <property type="component" value="Chromosome"/>
</dbReference>
<dbReference type="GO" id="GO:0015420">
    <property type="term" value="F:ABC-type vitamin B12 transporter activity"/>
    <property type="evidence" value="ECO:0007669"/>
    <property type="project" value="UniProtKB-UniRule"/>
</dbReference>
<dbReference type="GO" id="GO:0003824">
    <property type="term" value="F:catalytic activity"/>
    <property type="evidence" value="ECO:0007669"/>
    <property type="project" value="InterPro"/>
</dbReference>
<dbReference type="GO" id="GO:0009236">
    <property type="term" value="P:cobalamin biosynthetic process"/>
    <property type="evidence" value="ECO:0007669"/>
    <property type="project" value="UniProtKB-UniRule"/>
</dbReference>
<dbReference type="CDD" id="cd05389">
    <property type="entry name" value="CobQ_N"/>
    <property type="match status" value="1"/>
</dbReference>
<dbReference type="CDD" id="cd01750">
    <property type="entry name" value="GATase1_CobQ"/>
    <property type="match status" value="1"/>
</dbReference>
<dbReference type="Gene3D" id="3.40.50.880">
    <property type="match status" value="1"/>
</dbReference>
<dbReference type="Gene3D" id="3.40.50.300">
    <property type="entry name" value="P-loop containing nucleotide triphosphate hydrolases"/>
    <property type="match status" value="1"/>
</dbReference>
<dbReference type="HAMAP" id="MF_00028">
    <property type="entry name" value="CobQ"/>
    <property type="match status" value="1"/>
</dbReference>
<dbReference type="InterPro" id="IPR029062">
    <property type="entry name" value="Class_I_gatase-like"/>
</dbReference>
<dbReference type="InterPro" id="IPR002586">
    <property type="entry name" value="CobQ/CobB/MinD/ParA_Nub-bd_dom"/>
</dbReference>
<dbReference type="InterPro" id="IPR033949">
    <property type="entry name" value="CobQ_GATase1"/>
</dbReference>
<dbReference type="InterPro" id="IPR047045">
    <property type="entry name" value="CobQ_N"/>
</dbReference>
<dbReference type="InterPro" id="IPR004459">
    <property type="entry name" value="CobQ_synth"/>
</dbReference>
<dbReference type="InterPro" id="IPR011698">
    <property type="entry name" value="GATase_3"/>
</dbReference>
<dbReference type="InterPro" id="IPR027417">
    <property type="entry name" value="P-loop_NTPase"/>
</dbReference>
<dbReference type="NCBIfam" id="TIGR00313">
    <property type="entry name" value="cobQ"/>
    <property type="match status" value="1"/>
</dbReference>
<dbReference type="NCBIfam" id="NF001989">
    <property type="entry name" value="PRK00784.1"/>
    <property type="match status" value="1"/>
</dbReference>
<dbReference type="PANTHER" id="PTHR21343:SF1">
    <property type="entry name" value="COBYRIC ACID SYNTHASE"/>
    <property type="match status" value="1"/>
</dbReference>
<dbReference type="PANTHER" id="PTHR21343">
    <property type="entry name" value="DETHIOBIOTIN SYNTHETASE"/>
    <property type="match status" value="1"/>
</dbReference>
<dbReference type="Pfam" id="PF01656">
    <property type="entry name" value="CbiA"/>
    <property type="match status" value="1"/>
</dbReference>
<dbReference type="Pfam" id="PF07685">
    <property type="entry name" value="GATase_3"/>
    <property type="match status" value="1"/>
</dbReference>
<dbReference type="SUPFAM" id="SSF52317">
    <property type="entry name" value="Class I glutamine amidotransferase-like"/>
    <property type="match status" value="1"/>
</dbReference>
<dbReference type="SUPFAM" id="SSF52540">
    <property type="entry name" value="P-loop containing nucleoside triphosphate hydrolases"/>
    <property type="match status" value="1"/>
</dbReference>
<dbReference type="PROSITE" id="PS51274">
    <property type="entry name" value="GATASE_COBBQ"/>
    <property type="match status" value="1"/>
</dbReference>
<keyword id="KW-0169">Cobalamin biosynthesis</keyword>
<keyword id="KW-0315">Glutamine amidotransferase</keyword>
<sequence>MSARVLMVQGCTSDAGKSTLVAALCRWLHRQGIAVAPFKPQNMALNSAVTVDGGEIGRAQALQAQACGLEPQTDFNPVLLKPNSDTGAQVIVHGHPVATLDAVGYHAYKATAFNAVLASHARLVERFDVVLVEGAGSPAEINLRDNDIANMGYAEAVDCAVILVADIDRGGVFAHLVGTLALLSASERARVAGVVINRFRGDLALLQPGLAWLERETGKPVLGVLPYLHGLQLDAEDAVPRNAPQEPQSQLRVVVPVLPRISNHTDVDALLAHPQVDVRLIGPGQTPPPCDLILLPGSKSTRHDLQWLRTHGWDAAIARHLRYGGKLLGICGGLQMLGTHLHDPRGIEGAAGSSPGLGWLSLQTTLQPHKQLHRVHGRLLLGDASVSGYEIHCALSSGAALARPLLQLDDGRTDGAISDDGQVLGTYVHGVFDHPMHWLHCWRGPVWRRPRHWILPRCAKPAWSVWPMRCTRIWIPRH</sequence>